<keyword id="KW-0028">Amino-acid biosynthesis</keyword>
<keyword id="KW-0067">ATP-binding</keyword>
<keyword id="KW-0963">Cytoplasm</keyword>
<keyword id="KW-0418">Kinase</keyword>
<keyword id="KW-0547">Nucleotide-binding</keyword>
<keyword id="KW-0791">Threonine biosynthesis</keyword>
<keyword id="KW-0808">Transferase</keyword>
<comment type="function">
    <text evidence="1">Catalyzes the ATP-dependent phosphorylation of L-homoserine to L-homoserine phosphate.</text>
</comment>
<comment type="catalytic activity">
    <reaction evidence="1">
        <text>L-homoserine + ATP = O-phospho-L-homoserine + ADP + H(+)</text>
        <dbReference type="Rhea" id="RHEA:13985"/>
        <dbReference type="ChEBI" id="CHEBI:15378"/>
        <dbReference type="ChEBI" id="CHEBI:30616"/>
        <dbReference type="ChEBI" id="CHEBI:57476"/>
        <dbReference type="ChEBI" id="CHEBI:57590"/>
        <dbReference type="ChEBI" id="CHEBI:456216"/>
        <dbReference type="EC" id="2.7.1.39"/>
    </reaction>
</comment>
<comment type="pathway">
    <text evidence="1">Amino-acid biosynthesis; L-threonine biosynthesis; L-threonine from L-aspartate: step 4/5.</text>
</comment>
<comment type="subcellular location">
    <subcellularLocation>
        <location evidence="1">Cytoplasm</location>
    </subcellularLocation>
</comment>
<comment type="similarity">
    <text evidence="1">Belongs to the GHMP kinase family. Homoserine kinase subfamily.</text>
</comment>
<organism>
    <name type="scientific">Bacillus cereus (strain B4264)</name>
    <dbReference type="NCBI Taxonomy" id="405532"/>
    <lineage>
        <taxon>Bacteria</taxon>
        <taxon>Bacillati</taxon>
        <taxon>Bacillota</taxon>
        <taxon>Bacilli</taxon>
        <taxon>Bacillales</taxon>
        <taxon>Bacillaceae</taxon>
        <taxon>Bacillus</taxon>
        <taxon>Bacillus cereus group</taxon>
    </lineage>
</organism>
<protein>
    <recommendedName>
        <fullName evidence="1">Homoserine kinase</fullName>
        <shortName evidence="1">HK</shortName>
        <shortName evidence="1">HSK</shortName>
        <ecNumber evidence="1">2.7.1.39</ecNumber>
    </recommendedName>
</protein>
<feature type="chain" id="PRO_1000122405" description="Homoserine kinase">
    <location>
        <begin position="1"/>
        <end position="297"/>
    </location>
</feature>
<feature type="binding site" evidence="1">
    <location>
        <begin position="82"/>
        <end position="92"/>
    </location>
    <ligand>
        <name>ATP</name>
        <dbReference type="ChEBI" id="CHEBI:30616"/>
    </ligand>
</feature>
<accession>B7HJ93</accession>
<gene>
    <name evidence="1" type="primary">thrB</name>
    <name type="ordered locus">BCB4264_A1972</name>
</gene>
<sequence length="297" mass="31990">MIPFSVRVPASTANVGPGFDSVGIALSLYLDVVVKEKADKWQVIHSFEESIPADDKNLIVSTACKVCPSISPHIIEVTSNIPLTRGLGSSASAIVAGIELANQLGNLNLTADQKVQIATNFEGHPDNVAASILGGTVIGALDGKDVSVVRIESKELGVVSLIPNEELNTDESRSVLPKMFPFHEAVKASAISNVLVAALCQKRWEVVGEMMERDHFHEPYRLELVPLLPSIRKCAKEFGAYGTALSGAGPSIFILAPYEKRQEIAGQLARVFTDMKVCELEIDHKGIIVNKEEHIGS</sequence>
<proteinExistence type="inferred from homology"/>
<name>KHSE_BACC4</name>
<evidence type="ECO:0000255" key="1">
    <source>
        <dbReference type="HAMAP-Rule" id="MF_00384"/>
    </source>
</evidence>
<reference key="1">
    <citation type="submission" date="2008-10" db="EMBL/GenBank/DDBJ databases">
        <title>Genome sequence of Bacillus cereus B4264.</title>
        <authorList>
            <person name="Dodson R.J."/>
            <person name="Durkin A.S."/>
            <person name="Rosovitz M.J."/>
            <person name="Rasko D.A."/>
            <person name="Hoffmaster A."/>
            <person name="Ravel J."/>
            <person name="Sutton G."/>
        </authorList>
    </citation>
    <scope>NUCLEOTIDE SEQUENCE [LARGE SCALE GENOMIC DNA]</scope>
    <source>
        <strain>B4264</strain>
    </source>
</reference>
<dbReference type="EC" id="2.7.1.39" evidence="1"/>
<dbReference type="EMBL" id="CP001176">
    <property type="protein sequence ID" value="ACK63325.1"/>
    <property type="molecule type" value="Genomic_DNA"/>
</dbReference>
<dbReference type="RefSeq" id="WP_000612098.1">
    <property type="nucleotide sequence ID" value="NC_011725.1"/>
</dbReference>
<dbReference type="SMR" id="B7HJ93"/>
<dbReference type="KEGG" id="bcb:BCB4264_A1972"/>
<dbReference type="HOGENOM" id="CLU_041243_0_0_9"/>
<dbReference type="UniPathway" id="UPA00050">
    <property type="reaction ID" value="UER00064"/>
</dbReference>
<dbReference type="Proteomes" id="UP000007096">
    <property type="component" value="Chromosome"/>
</dbReference>
<dbReference type="GO" id="GO:0005737">
    <property type="term" value="C:cytoplasm"/>
    <property type="evidence" value="ECO:0007669"/>
    <property type="project" value="UniProtKB-SubCell"/>
</dbReference>
<dbReference type="GO" id="GO:0005524">
    <property type="term" value="F:ATP binding"/>
    <property type="evidence" value="ECO:0007669"/>
    <property type="project" value="UniProtKB-UniRule"/>
</dbReference>
<dbReference type="GO" id="GO:0004413">
    <property type="term" value="F:homoserine kinase activity"/>
    <property type="evidence" value="ECO:0007669"/>
    <property type="project" value="UniProtKB-UniRule"/>
</dbReference>
<dbReference type="GO" id="GO:0009088">
    <property type="term" value="P:threonine biosynthetic process"/>
    <property type="evidence" value="ECO:0007669"/>
    <property type="project" value="UniProtKB-UniRule"/>
</dbReference>
<dbReference type="Gene3D" id="3.30.230.10">
    <property type="match status" value="1"/>
</dbReference>
<dbReference type="Gene3D" id="3.30.70.890">
    <property type="entry name" value="GHMP kinase, C-terminal domain"/>
    <property type="match status" value="1"/>
</dbReference>
<dbReference type="HAMAP" id="MF_00384">
    <property type="entry name" value="Homoser_kinase"/>
    <property type="match status" value="1"/>
</dbReference>
<dbReference type="InterPro" id="IPR013750">
    <property type="entry name" value="GHMP_kinase_C_dom"/>
</dbReference>
<dbReference type="InterPro" id="IPR036554">
    <property type="entry name" value="GHMP_kinase_C_sf"/>
</dbReference>
<dbReference type="InterPro" id="IPR006204">
    <property type="entry name" value="GHMP_kinase_N_dom"/>
</dbReference>
<dbReference type="InterPro" id="IPR006203">
    <property type="entry name" value="GHMP_knse_ATP-bd_CS"/>
</dbReference>
<dbReference type="InterPro" id="IPR000870">
    <property type="entry name" value="Homoserine_kinase"/>
</dbReference>
<dbReference type="InterPro" id="IPR020568">
    <property type="entry name" value="Ribosomal_Su5_D2-typ_SF"/>
</dbReference>
<dbReference type="InterPro" id="IPR014721">
    <property type="entry name" value="Ribsml_uS5_D2-typ_fold_subgr"/>
</dbReference>
<dbReference type="NCBIfam" id="TIGR00191">
    <property type="entry name" value="thrB"/>
    <property type="match status" value="1"/>
</dbReference>
<dbReference type="PANTHER" id="PTHR20861:SF1">
    <property type="entry name" value="HOMOSERINE KINASE"/>
    <property type="match status" value="1"/>
</dbReference>
<dbReference type="PANTHER" id="PTHR20861">
    <property type="entry name" value="HOMOSERINE/4-DIPHOSPHOCYTIDYL-2-C-METHYL-D-ERYTHRITOL KINASE"/>
    <property type="match status" value="1"/>
</dbReference>
<dbReference type="Pfam" id="PF08544">
    <property type="entry name" value="GHMP_kinases_C"/>
    <property type="match status" value="1"/>
</dbReference>
<dbReference type="Pfam" id="PF00288">
    <property type="entry name" value="GHMP_kinases_N"/>
    <property type="match status" value="1"/>
</dbReference>
<dbReference type="PIRSF" id="PIRSF000676">
    <property type="entry name" value="Homoser_kin"/>
    <property type="match status" value="1"/>
</dbReference>
<dbReference type="PRINTS" id="PR00958">
    <property type="entry name" value="HOMSERKINASE"/>
</dbReference>
<dbReference type="SUPFAM" id="SSF55060">
    <property type="entry name" value="GHMP Kinase, C-terminal domain"/>
    <property type="match status" value="1"/>
</dbReference>
<dbReference type="SUPFAM" id="SSF54211">
    <property type="entry name" value="Ribosomal protein S5 domain 2-like"/>
    <property type="match status" value="1"/>
</dbReference>
<dbReference type="PROSITE" id="PS00627">
    <property type="entry name" value="GHMP_KINASES_ATP"/>
    <property type="match status" value="1"/>
</dbReference>